<name>RL18_METTP</name>
<protein>
    <recommendedName>
        <fullName evidence="1">Large ribosomal subunit protein uL18</fullName>
    </recommendedName>
    <alternativeName>
        <fullName evidence="2">50S ribosomal protein L18</fullName>
    </alternativeName>
</protein>
<accession>A0B9V1</accession>
<feature type="chain" id="PRO_1000053062" description="Large ribosomal subunit protein uL18">
    <location>
        <begin position="1"/>
        <end position="169"/>
    </location>
</feature>
<dbReference type="EMBL" id="CP000477">
    <property type="protein sequence ID" value="ABK15475.1"/>
    <property type="molecule type" value="Genomic_DNA"/>
</dbReference>
<dbReference type="RefSeq" id="WP_011696853.1">
    <property type="nucleotide sequence ID" value="NC_008553.1"/>
</dbReference>
<dbReference type="SMR" id="A0B9V1"/>
<dbReference type="STRING" id="349307.Mthe_1709"/>
<dbReference type="GeneID" id="4462669"/>
<dbReference type="KEGG" id="mtp:Mthe_1709"/>
<dbReference type="HOGENOM" id="CLU_056222_2_0_2"/>
<dbReference type="OrthoDB" id="8644at2157"/>
<dbReference type="Proteomes" id="UP000000674">
    <property type="component" value="Chromosome"/>
</dbReference>
<dbReference type="GO" id="GO:0022625">
    <property type="term" value="C:cytosolic large ribosomal subunit"/>
    <property type="evidence" value="ECO:0007669"/>
    <property type="project" value="TreeGrafter"/>
</dbReference>
<dbReference type="GO" id="GO:0008097">
    <property type="term" value="F:5S rRNA binding"/>
    <property type="evidence" value="ECO:0007669"/>
    <property type="project" value="InterPro"/>
</dbReference>
<dbReference type="GO" id="GO:0003735">
    <property type="term" value="F:structural constituent of ribosome"/>
    <property type="evidence" value="ECO:0007669"/>
    <property type="project" value="InterPro"/>
</dbReference>
<dbReference type="GO" id="GO:0000027">
    <property type="term" value="P:ribosomal large subunit assembly"/>
    <property type="evidence" value="ECO:0007669"/>
    <property type="project" value="TreeGrafter"/>
</dbReference>
<dbReference type="GO" id="GO:0006412">
    <property type="term" value="P:translation"/>
    <property type="evidence" value="ECO:0007669"/>
    <property type="project" value="UniProtKB-UniRule"/>
</dbReference>
<dbReference type="CDD" id="cd00432">
    <property type="entry name" value="Ribosomal_L18_L5e"/>
    <property type="match status" value="1"/>
</dbReference>
<dbReference type="Gene3D" id="3.30.420.100">
    <property type="match status" value="1"/>
</dbReference>
<dbReference type="HAMAP" id="MF_01337_A">
    <property type="entry name" value="Ribosomal_uL18_A"/>
    <property type="match status" value="1"/>
</dbReference>
<dbReference type="InterPro" id="IPR005485">
    <property type="entry name" value="Rbsml_uL18_euk"/>
</dbReference>
<dbReference type="NCBIfam" id="NF006342">
    <property type="entry name" value="PRK08569.1"/>
    <property type="match status" value="1"/>
</dbReference>
<dbReference type="PANTHER" id="PTHR23410:SF12">
    <property type="entry name" value="LARGE RIBOSOMAL SUBUNIT PROTEIN UL18"/>
    <property type="match status" value="1"/>
</dbReference>
<dbReference type="PANTHER" id="PTHR23410">
    <property type="entry name" value="RIBOSOMAL PROTEIN L5-RELATED"/>
    <property type="match status" value="1"/>
</dbReference>
<dbReference type="Pfam" id="PF17144">
    <property type="entry name" value="Ribosomal_L5e"/>
    <property type="match status" value="2"/>
</dbReference>
<dbReference type="PRINTS" id="PR00058">
    <property type="entry name" value="RIBOSOMALL5"/>
</dbReference>
<dbReference type="SUPFAM" id="SSF53137">
    <property type="entry name" value="Translational machinery components"/>
    <property type="match status" value="1"/>
</dbReference>
<proteinExistence type="inferred from homology"/>
<reference key="1">
    <citation type="submission" date="2006-10" db="EMBL/GenBank/DDBJ databases">
        <title>Complete sequence of Methanosaeta thermophila PT.</title>
        <authorList>
            <consortium name="US DOE Joint Genome Institute"/>
            <person name="Copeland A."/>
            <person name="Lucas S."/>
            <person name="Lapidus A."/>
            <person name="Barry K."/>
            <person name="Detter J.C."/>
            <person name="Glavina del Rio T."/>
            <person name="Hammon N."/>
            <person name="Israni S."/>
            <person name="Pitluck S."/>
            <person name="Chain P."/>
            <person name="Malfatti S."/>
            <person name="Shin M."/>
            <person name="Vergez L."/>
            <person name="Schmutz J."/>
            <person name="Larimer F."/>
            <person name="Land M."/>
            <person name="Hauser L."/>
            <person name="Kyrpides N."/>
            <person name="Kim E."/>
            <person name="Smith K.S."/>
            <person name="Ingram-Smith C."/>
            <person name="Richardson P."/>
        </authorList>
    </citation>
    <scope>NUCLEOTIDE SEQUENCE [LARGE SCALE GENOMIC DNA]</scope>
    <source>
        <strain>DSM 6194 / JCM 14653 / NBRC 101360 / PT</strain>
    </source>
</reference>
<gene>
    <name evidence="1" type="primary">rpl18</name>
    <name type="ordered locus">Mthe_1709</name>
</gene>
<organism>
    <name type="scientific">Methanothrix thermoacetophila (strain DSM 6194 / JCM 14653 / NBRC 101360 / PT)</name>
    <name type="common">Methanosaeta thermophila</name>
    <dbReference type="NCBI Taxonomy" id="349307"/>
    <lineage>
        <taxon>Archaea</taxon>
        <taxon>Methanobacteriati</taxon>
        <taxon>Methanobacteriota</taxon>
        <taxon>Stenosarchaea group</taxon>
        <taxon>Methanomicrobia</taxon>
        <taxon>Methanotrichales</taxon>
        <taxon>Methanotrichaceae</taxon>
        <taxon>Methanothrix</taxon>
    </lineage>
</organism>
<evidence type="ECO:0000255" key="1">
    <source>
        <dbReference type="HAMAP-Rule" id="MF_01337"/>
    </source>
</evidence>
<evidence type="ECO:0000305" key="2"/>
<sequence length="169" mass="18895">MATGPRYRVPFRRRREGRTNYHVRYRLILSRKPRVVVRKGNANITIQLIIAELKGDRTLLTVSSKELRNYGFQHSTGNVPAAYLTGLLFGKKMLALGYNEGILDIGLHSNSRGSRVYAALKGVVDAGVDVPHSPEVFPDDSRIRGEVIRDYTGVDVVSQFEAAREKILG</sequence>
<comment type="function">
    <text evidence="1">This is one of the proteins that bind and probably mediate the attachment of the 5S RNA into the large ribosomal subunit, where it forms part of the central protuberance.</text>
</comment>
<comment type="subunit">
    <text evidence="1">Part of the 50S ribosomal subunit. Contacts the 5S and 23S rRNAs.</text>
</comment>
<comment type="similarity">
    <text evidence="1">Belongs to the universal ribosomal protein uL18 family.</text>
</comment>
<keyword id="KW-1185">Reference proteome</keyword>
<keyword id="KW-0687">Ribonucleoprotein</keyword>
<keyword id="KW-0689">Ribosomal protein</keyword>
<keyword id="KW-0694">RNA-binding</keyword>
<keyword id="KW-0699">rRNA-binding</keyword>